<reference key="1">
    <citation type="journal article" date="1988" name="Dev. Biol.">
        <title>Organization and expression of a second chromosome follicle cell gene cluster in Drosophila.</title>
        <authorList>
            <person name="Popodi E."/>
            <person name="Minoo P."/>
            <person name="Burke T."/>
            <person name="Waring G.L."/>
        </authorList>
    </citation>
    <scope>NUCLEOTIDE SEQUENCE [GENOMIC DNA]</scope>
    <scope>FUNCTION</scope>
    <scope>TISSUE SPECIFICITY</scope>
    <scope>DEVELOPMENTAL STAGE</scope>
</reference>
<reference key="2">
    <citation type="journal article" date="2007" name="Mol. Biol. Evol.">
        <title>Rapid evolution of outer egg membrane proteins in the Drosophila melanogaster subgroup: a case of ecologically driven evolution of female reproductive traits.</title>
        <authorList>
            <person name="Jagadeeshan S."/>
            <person name="Singh R.S."/>
        </authorList>
    </citation>
    <scope>NUCLEOTIDE SEQUENCE [GENOMIC DNA]</scope>
</reference>
<reference key="3">
    <citation type="journal article" date="2000" name="Science">
        <title>The genome sequence of Drosophila melanogaster.</title>
        <authorList>
            <person name="Adams M.D."/>
            <person name="Celniker S.E."/>
            <person name="Holt R.A."/>
            <person name="Evans C.A."/>
            <person name="Gocayne J.D."/>
            <person name="Amanatides P.G."/>
            <person name="Scherer S.E."/>
            <person name="Li P.W."/>
            <person name="Hoskins R.A."/>
            <person name="Galle R.F."/>
            <person name="George R.A."/>
            <person name="Lewis S.E."/>
            <person name="Richards S."/>
            <person name="Ashburner M."/>
            <person name="Henderson S.N."/>
            <person name="Sutton G.G."/>
            <person name="Wortman J.R."/>
            <person name="Yandell M.D."/>
            <person name="Zhang Q."/>
            <person name="Chen L.X."/>
            <person name="Brandon R.C."/>
            <person name="Rogers Y.-H.C."/>
            <person name="Blazej R.G."/>
            <person name="Champe M."/>
            <person name="Pfeiffer B.D."/>
            <person name="Wan K.H."/>
            <person name="Doyle C."/>
            <person name="Baxter E.G."/>
            <person name="Helt G."/>
            <person name="Nelson C.R."/>
            <person name="Miklos G.L.G."/>
            <person name="Abril J.F."/>
            <person name="Agbayani A."/>
            <person name="An H.-J."/>
            <person name="Andrews-Pfannkoch C."/>
            <person name="Baldwin D."/>
            <person name="Ballew R.M."/>
            <person name="Basu A."/>
            <person name="Baxendale J."/>
            <person name="Bayraktaroglu L."/>
            <person name="Beasley E.M."/>
            <person name="Beeson K.Y."/>
            <person name="Benos P.V."/>
            <person name="Berman B.P."/>
            <person name="Bhandari D."/>
            <person name="Bolshakov S."/>
            <person name="Borkova D."/>
            <person name="Botchan M.R."/>
            <person name="Bouck J."/>
            <person name="Brokstein P."/>
            <person name="Brottier P."/>
            <person name="Burtis K.C."/>
            <person name="Busam D.A."/>
            <person name="Butler H."/>
            <person name="Cadieu E."/>
            <person name="Center A."/>
            <person name="Chandra I."/>
            <person name="Cherry J.M."/>
            <person name="Cawley S."/>
            <person name="Dahlke C."/>
            <person name="Davenport L.B."/>
            <person name="Davies P."/>
            <person name="de Pablos B."/>
            <person name="Delcher A."/>
            <person name="Deng Z."/>
            <person name="Mays A.D."/>
            <person name="Dew I."/>
            <person name="Dietz S.M."/>
            <person name="Dodson K."/>
            <person name="Doup L.E."/>
            <person name="Downes M."/>
            <person name="Dugan-Rocha S."/>
            <person name="Dunkov B.C."/>
            <person name="Dunn P."/>
            <person name="Durbin K.J."/>
            <person name="Evangelista C.C."/>
            <person name="Ferraz C."/>
            <person name="Ferriera S."/>
            <person name="Fleischmann W."/>
            <person name="Fosler C."/>
            <person name="Gabrielian A.E."/>
            <person name="Garg N.S."/>
            <person name="Gelbart W.M."/>
            <person name="Glasser K."/>
            <person name="Glodek A."/>
            <person name="Gong F."/>
            <person name="Gorrell J.H."/>
            <person name="Gu Z."/>
            <person name="Guan P."/>
            <person name="Harris M."/>
            <person name="Harris N.L."/>
            <person name="Harvey D.A."/>
            <person name="Heiman T.J."/>
            <person name="Hernandez J.R."/>
            <person name="Houck J."/>
            <person name="Hostin D."/>
            <person name="Houston K.A."/>
            <person name="Howland T.J."/>
            <person name="Wei M.-H."/>
            <person name="Ibegwam C."/>
            <person name="Jalali M."/>
            <person name="Kalush F."/>
            <person name="Karpen G.H."/>
            <person name="Ke Z."/>
            <person name="Kennison J.A."/>
            <person name="Ketchum K.A."/>
            <person name="Kimmel B.E."/>
            <person name="Kodira C.D."/>
            <person name="Kraft C.L."/>
            <person name="Kravitz S."/>
            <person name="Kulp D."/>
            <person name="Lai Z."/>
            <person name="Lasko P."/>
            <person name="Lei Y."/>
            <person name="Levitsky A.A."/>
            <person name="Li J.H."/>
            <person name="Li Z."/>
            <person name="Liang Y."/>
            <person name="Lin X."/>
            <person name="Liu X."/>
            <person name="Mattei B."/>
            <person name="McIntosh T.C."/>
            <person name="McLeod M.P."/>
            <person name="McPherson D."/>
            <person name="Merkulov G."/>
            <person name="Milshina N.V."/>
            <person name="Mobarry C."/>
            <person name="Morris J."/>
            <person name="Moshrefi A."/>
            <person name="Mount S.M."/>
            <person name="Moy M."/>
            <person name="Murphy B."/>
            <person name="Murphy L."/>
            <person name="Muzny D.M."/>
            <person name="Nelson D.L."/>
            <person name="Nelson D.R."/>
            <person name="Nelson K.A."/>
            <person name="Nixon K."/>
            <person name="Nusskern D.R."/>
            <person name="Pacleb J.M."/>
            <person name="Palazzolo M."/>
            <person name="Pittman G.S."/>
            <person name="Pan S."/>
            <person name="Pollard J."/>
            <person name="Puri V."/>
            <person name="Reese M.G."/>
            <person name="Reinert K."/>
            <person name="Remington K."/>
            <person name="Saunders R.D.C."/>
            <person name="Scheeler F."/>
            <person name="Shen H."/>
            <person name="Shue B.C."/>
            <person name="Siden-Kiamos I."/>
            <person name="Simpson M."/>
            <person name="Skupski M.P."/>
            <person name="Smith T.J."/>
            <person name="Spier E."/>
            <person name="Spradling A.C."/>
            <person name="Stapleton M."/>
            <person name="Strong R."/>
            <person name="Sun E."/>
            <person name="Svirskas R."/>
            <person name="Tector C."/>
            <person name="Turner R."/>
            <person name="Venter E."/>
            <person name="Wang A.H."/>
            <person name="Wang X."/>
            <person name="Wang Z.-Y."/>
            <person name="Wassarman D.A."/>
            <person name="Weinstock G.M."/>
            <person name="Weissenbach J."/>
            <person name="Williams S.M."/>
            <person name="Woodage T."/>
            <person name="Worley K.C."/>
            <person name="Wu D."/>
            <person name="Yang S."/>
            <person name="Yao Q.A."/>
            <person name="Ye J."/>
            <person name="Yeh R.-F."/>
            <person name="Zaveri J.S."/>
            <person name="Zhan M."/>
            <person name="Zhang G."/>
            <person name="Zhao Q."/>
            <person name="Zheng L."/>
            <person name="Zheng X.H."/>
            <person name="Zhong F.N."/>
            <person name="Zhong W."/>
            <person name="Zhou X."/>
            <person name="Zhu S.C."/>
            <person name="Zhu X."/>
            <person name="Smith H.O."/>
            <person name="Gibbs R.A."/>
            <person name="Myers E.W."/>
            <person name="Rubin G.M."/>
            <person name="Venter J.C."/>
        </authorList>
    </citation>
    <scope>NUCLEOTIDE SEQUENCE [LARGE SCALE GENOMIC DNA]</scope>
    <source>
        <strain>Berkeley</strain>
    </source>
</reference>
<reference key="4">
    <citation type="journal article" date="2002" name="Genome Biol.">
        <title>Annotation of the Drosophila melanogaster euchromatic genome: a systematic review.</title>
        <authorList>
            <person name="Misra S."/>
            <person name="Crosby M.A."/>
            <person name="Mungall C.J."/>
            <person name="Matthews B.B."/>
            <person name="Campbell K.S."/>
            <person name="Hradecky P."/>
            <person name="Huang Y."/>
            <person name="Kaminker J.S."/>
            <person name="Millburn G.H."/>
            <person name="Prochnik S.E."/>
            <person name="Smith C.D."/>
            <person name="Tupy J.L."/>
            <person name="Whitfield E.J."/>
            <person name="Bayraktaroglu L."/>
            <person name="Berman B.P."/>
            <person name="Bettencourt B.R."/>
            <person name="Celniker S.E."/>
            <person name="de Grey A.D.N.J."/>
            <person name="Drysdale R.A."/>
            <person name="Harris N.L."/>
            <person name="Richter J."/>
            <person name="Russo S."/>
            <person name="Schroeder A.J."/>
            <person name="Shu S.Q."/>
            <person name="Stapleton M."/>
            <person name="Yamada C."/>
            <person name="Ashburner M."/>
            <person name="Gelbart W.M."/>
            <person name="Rubin G.M."/>
            <person name="Lewis S.E."/>
        </authorList>
    </citation>
    <scope>GENOME REANNOTATION</scope>
    <source>
        <strain>Berkeley</strain>
    </source>
</reference>
<reference key="5">
    <citation type="journal article" date="2004" name="Dev. Biol.">
        <title>The N-terminal prodomain of sV23 is essential for the assembly of a functional vitelline membrane network in Drosophila.</title>
        <authorList>
            <person name="Manogaran A."/>
            <person name="Waring G.L."/>
        </authorList>
    </citation>
    <scope>FUNCTION</scope>
    <scope>DOMAINS VM; N-TERMINAL AND C-TERMINAL</scope>
    <scope>PROTEOLYTIC PROCESSING</scope>
</reference>
<reference key="6">
    <citation type="journal article" date="2008" name="Dev. Biol.">
        <title>Palisade is required in the Drosophila ovary for assembly and function of the protective vitelline membrane.</title>
        <authorList>
            <person name="Elalayli M."/>
            <person name="Hall J.D."/>
            <person name="Fakhouri M."/>
            <person name="Neiswender H."/>
            <person name="Ellison T.T."/>
            <person name="Han Z."/>
            <person name="Roon P."/>
            <person name="LeMosy E.K."/>
        </authorList>
    </citation>
    <scope>FUNCTION</scope>
    <scope>SUBCELLULAR LOCATION</scope>
    <scope>CROSS-LINKING</scope>
</reference>
<reference key="7">
    <citation type="journal article" date="2010" name="Dev. Biol.">
        <title>Drosophila vitelline membrane assembly: a critical role for an evolutionarily conserved cysteine in the 'VM domain' of sV23.</title>
        <authorList>
            <person name="Wu T."/>
            <person name="Manogaran A.L."/>
            <person name="Beauchamp J.M."/>
            <person name="Waring G.L."/>
        </authorList>
    </citation>
    <scope>FUNCTION</scope>
    <scope>INTERACTION WITH VML AND VM26AA</scope>
    <scope>PROTEOLYTIC PROCESSING</scope>
    <scope>DISULFIDE BOND</scope>
    <scope>DISRUPTION PHENOTYPE</scope>
    <scope>MUTAGENESIS OF CYS-123; CYS-131 AND CYS-140</scope>
</reference>
<evidence type="ECO:0000255" key="1"/>
<evidence type="ECO:0000255" key="2">
    <source>
        <dbReference type="PROSITE-ProRule" id="PRU00483"/>
    </source>
</evidence>
<evidence type="ECO:0000269" key="3">
    <source>
    </source>
</evidence>
<evidence type="ECO:0000269" key="4">
    <source>
    </source>
</evidence>
<evidence type="ECO:0000269" key="5">
    <source>
    </source>
</evidence>
<evidence type="ECO:0000269" key="6">
    <source>
    </source>
</evidence>
<evidence type="ECO:0000305" key="7"/>
<evidence type="ECO:0000305" key="8">
    <source>
    </source>
</evidence>
<evidence type="ECO:0000305" key="9">
    <source>
    </source>
</evidence>
<evidence type="ECO:0000305" key="10">
    <source>
    </source>
</evidence>
<evidence type="ECO:0000312" key="11">
    <source>
        <dbReference type="FlyBase" id="FBgn0003980"/>
    </source>
</evidence>
<evidence type="ECO:0000312" key="12">
    <source>
        <dbReference type="Proteomes" id="UP000000803"/>
    </source>
</evidence>
<comment type="function">
    <text evidence="3 4 5 6">Major early eggshell protein secreted by follicle cells into the perivitelline space and incorporated into the vitelline membrane (PubMed:3132408). Involved in vitelline membrane biogenesis; forms a cross-linked network with other vitelline membrane components (PubMed:15136154, PubMed:18514182, PubMed:20832396).</text>
</comment>
<comment type="subunit">
    <text evidence="5">Interacts with vml and Vm26Aa; forms part of a disulfide-linked network within the vitelline membrane of stage 10 egg chambers.</text>
</comment>
<comment type="subcellular location">
    <subcellularLocation>
        <location evidence="4">Secreted</location>
    </subcellularLocation>
    <subcellularLocation>
        <location evidence="4">Secreted</location>
        <location evidence="4">Extracellular space</location>
        <location evidence="4">Extracellular matrix</location>
    </subcellularLocation>
    <text evidence="9">Secreted into the perivitelline space by follicle cells and becomes incorporated into the vitelline membrane.</text>
</comment>
<comment type="tissue specificity">
    <text evidence="6">Follicle cells.</text>
</comment>
<comment type="developmental stage">
    <text evidence="6">Expressed during vitelline membrane biosynthesis.</text>
</comment>
<comment type="domain">
    <text>The tetrapeptide (A-A-P-[AV]) repeats found throughout the protein are also present in many proteins constituting the protective envelope of other species.</text>
</comment>
<comment type="domain">
    <text evidence="3">The C-terminal propeptide is removed between stage 9 and 12 of oogenesis (PubMed:15136154). The C-terminal propeptide is non-essential for egg fertility (PubMed:15136154).</text>
</comment>
<comment type="domain">
    <text evidence="3">The N-terminal propeptide is removed between stage 11 and 14 of oogenesis (PubMed:15136154). The N-terminal propeptide is essential for egg fertility but its removal is not; may be involved in positioning and aligning this protein to facilitate disulfide and non-disulfide cross-linking within the vitelline membrane (PubMed:15136154).</text>
</comment>
<comment type="domain">
    <text evidence="3">The VM domain may be involved in facilitating efficient secretion of this protein.</text>
</comment>
<comment type="PTM">
    <text evidence="3 5">Proteolytically processed after secretion into the perivitelline space (PubMed:15136154). Undergoes several proteolytic processing steps during formation of the vitelline membrane; an initial processing step removing a C-terminal propeptide occurs between stage 9 and 12 of oogenesis while a second removing a N-terminal propeptide occurs between stage 11 and 14 (PubMed:15136154, PubMed:20832396).</text>
</comment>
<comment type="PTM">
    <text evidence="4 5">Becomes part of a disulfide-linked network including other vitelline membrane proteins, including vml and Vm26Aa, during vitelline membrane biogenesis and maturation (PubMed:20832396). Cys-123, Cys-131 and Cys-140 are involved in disulfide network formation, with Cys-131 being the most important (PubMed:20832396). Undergoes both disulfide and non-disulfide cross-linking upon incorporation into the vitelline membrane (PubMed:18514182).</text>
</comment>
<comment type="disruption phenotype">
    <text evidence="5">Females are sterile.</text>
</comment>
<comment type="similarity">
    <text evidence="7">Belongs to the vitelline membrane protein family.</text>
</comment>
<organism evidence="12">
    <name type="scientific">Drosophila melanogaster</name>
    <name type="common">Fruit fly</name>
    <dbReference type="NCBI Taxonomy" id="7227"/>
    <lineage>
        <taxon>Eukaryota</taxon>
        <taxon>Metazoa</taxon>
        <taxon>Ecdysozoa</taxon>
        <taxon>Arthropoda</taxon>
        <taxon>Hexapoda</taxon>
        <taxon>Insecta</taxon>
        <taxon>Pterygota</taxon>
        <taxon>Neoptera</taxon>
        <taxon>Endopterygota</taxon>
        <taxon>Diptera</taxon>
        <taxon>Brachycera</taxon>
        <taxon>Muscomorpha</taxon>
        <taxon>Ephydroidea</taxon>
        <taxon>Drosophilidae</taxon>
        <taxon>Drosophila</taxon>
        <taxon>Sophophora</taxon>
    </lineage>
</organism>
<name>VTU2_DROME</name>
<proteinExistence type="evidence at protein level"/>
<gene>
    <name evidence="11" type="primary">Vm26Ab</name>
    <name evidence="11" type="synonym">sV23</name>
    <name evidence="11" type="synonym">TU-4</name>
    <name evidence="11" type="ORF">CG9046</name>
</gene>
<keyword id="KW-1015">Disulfide bond</keyword>
<keyword id="KW-0272">Extracellular matrix</keyword>
<keyword id="KW-1185">Reference proteome</keyword>
<keyword id="KW-0677">Repeat</keyword>
<keyword id="KW-0964">Secreted</keyword>
<keyword id="KW-0732">Signal</keyword>
<sequence length="168" mass="16771">MAFNFGHLLIAGLVALSAVSSETIQLQPTQGILIPAPLAENIRVSRAAYGGYGAAPAAPSYSAPAAPAAQAYSAPAAPAYSAPAAPAYSAPAAPAYSAPAAPAYSAPAAPAYSAPASIPSPPCPKNYLFSCQPSLQPVPCSAPAQSYGSAGAYSQYVPQYAVPFVREL</sequence>
<protein>
    <recommendedName>
        <fullName evidence="7">Vitelline membrane protein Vm26Ab</fullName>
    </recommendedName>
    <alternativeName>
        <fullName>Protein SV23</fullName>
    </alternativeName>
    <alternativeName>
        <fullName>Protein TU-4</fullName>
    </alternativeName>
</protein>
<dbReference type="EMBL" id="M20936">
    <property type="protein sequence ID" value="AAA28984.1"/>
    <property type="molecule type" value="Genomic_DNA"/>
</dbReference>
<dbReference type="EMBL" id="EF441676">
    <property type="protein sequence ID" value="ABO71717.1"/>
    <property type="molecule type" value="Genomic_DNA"/>
</dbReference>
<dbReference type="EMBL" id="AE014134">
    <property type="protein sequence ID" value="AAF52308.1"/>
    <property type="molecule type" value="Genomic_DNA"/>
</dbReference>
<dbReference type="PIR" id="A45943">
    <property type="entry name" value="A45943"/>
</dbReference>
<dbReference type="RefSeq" id="NP_001285648.1">
    <property type="nucleotide sequence ID" value="NM_001298719.1"/>
</dbReference>
<dbReference type="RefSeq" id="NP_476784.1">
    <property type="nucleotide sequence ID" value="NM_057436.2"/>
</dbReference>
<dbReference type="BioGRID" id="59992">
    <property type="interactions" value="24"/>
</dbReference>
<dbReference type="DIP" id="DIP-19185N"/>
<dbReference type="FunCoup" id="P13238">
    <property type="interactions" value="18"/>
</dbReference>
<dbReference type="IntAct" id="P13238">
    <property type="interactions" value="19"/>
</dbReference>
<dbReference type="STRING" id="7227.FBpp0311564"/>
<dbReference type="PaxDb" id="7227-FBpp0078802"/>
<dbReference type="DNASU" id="33827"/>
<dbReference type="EnsemblMetazoa" id="FBtr0079171">
    <property type="protein sequence ID" value="FBpp0078802"/>
    <property type="gene ID" value="FBgn0003980"/>
</dbReference>
<dbReference type="EnsemblMetazoa" id="FBtr0345439">
    <property type="protein sequence ID" value="FBpp0311564"/>
    <property type="gene ID" value="FBgn0003980"/>
</dbReference>
<dbReference type="GeneID" id="33827"/>
<dbReference type="KEGG" id="dme:Dmel_CG9046"/>
<dbReference type="AGR" id="FB:FBgn0003980"/>
<dbReference type="CTD" id="33827"/>
<dbReference type="FlyBase" id="FBgn0003980">
    <property type="gene designation" value="Vm26Ab"/>
</dbReference>
<dbReference type="VEuPathDB" id="VectorBase:FBgn0003980"/>
<dbReference type="eggNOG" id="ENOG502TB8D">
    <property type="taxonomic scope" value="Eukaryota"/>
</dbReference>
<dbReference type="HOGENOM" id="CLU_1671188_0_0_1"/>
<dbReference type="InParanoid" id="P13238"/>
<dbReference type="OMA" id="FNIGHIF"/>
<dbReference type="OrthoDB" id="8062718at2759"/>
<dbReference type="PhylomeDB" id="P13238"/>
<dbReference type="SignaLink" id="P13238"/>
<dbReference type="BioGRID-ORCS" id="33827">
    <property type="hits" value="0 hits in 1 CRISPR screen"/>
</dbReference>
<dbReference type="GenomeRNAi" id="33827"/>
<dbReference type="PRO" id="PR:P13238"/>
<dbReference type="Proteomes" id="UP000000803">
    <property type="component" value="Chromosome 2L"/>
</dbReference>
<dbReference type="Bgee" id="FBgn0003980">
    <property type="expression patterns" value="Expressed in posterior terminal follicle cell in ovary and 62 other cell types or tissues"/>
</dbReference>
<dbReference type="ExpressionAtlas" id="P13238">
    <property type="expression patterns" value="baseline and differential"/>
</dbReference>
<dbReference type="GO" id="GO:0005576">
    <property type="term" value="C:extracellular region"/>
    <property type="evidence" value="ECO:0007669"/>
    <property type="project" value="UniProtKB-SubCell"/>
</dbReference>
<dbReference type="GO" id="GO:0060388">
    <property type="term" value="C:vitelline envelope"/>
    <property type="evidence" value="ECO:0000314"/>
    <property type="project" value="FlyBase"/>
</dbReference>
<dbReference type="GO" id="GO:0007304">
    <property type="term" value="P:chorion-containing eggshell formation"/>
    <property type="evidence" value="ECO:0007001"/>
    <property type="project" value="FlyBase"/>
</dbReference>
<dbReference type="GO" id="GO:0007343">
    <property type="term" value="P:egg activation"/>
    <property type="evidence" value="ECO:0000315"/>
    <property type="project" value="FlyBase"/>
</dbReference>
<dbReference type="GO" id="GO:0009617">
    <property type="term" value="P:response to bacterium"/>
    <property type="evidence" value="ECO:0007007"/>
    <property type="project" value="FlyBase"/>
</dbReference>
<dbReference type="GO" id="GO:0007305">
    <property type="term" value="P:vitelline membrane formation involved in chorion-containing eggshell formation"/>
    <property type="evidence" value="ECO:0000315"/>
    <property type="project" value="UniProtKB"/>
</dbReference>
<dbReference type="InterPro" id="IPR013135">
    <property type="entry name" value="Vitelline_membr_Cys-rich-dom"/>
</dbReference>
<dbReference type="Pfam" id="PF10542">
    <property type="entry name" value="Vitelline_membr"/>
    <property type="match status" value="1"/>
</dbReference>
<dbReference type="PROSITE" id="PS51137">
    <property type="entry name" value="VM"/>
    <property type="match status" value="1"/>
</dbReference>
<accession>P13238</accession>
<accession>A4UM08</accession>
<accession>Q9VMK6</accession>
<feature type="signal peptide" evidence="1">
    <location>
        <begin position="1"/>
        <end position="23"/>
    </location>
</feature>
<feature type="propeptide" id="PRO_0000461716" description="Removed between stage 11 and 14 of oogenesis" evidence="8">
    <location>
        <begin position="24"/>
        <end position="42"/>
    </location>
</feature>
<feature type="chain" id="PRO_0000022676" description="Vitelline membrane protein Vm26Ab">
    <location>
        <begin position="43"/>
        <end position="154"/>
    </location>
</feature>
<feature type="propeptide" id="PRO_0000461717" description="Removed between stage 9 and 12 of oogenesis" evidence="8">
    <location>
        <begin position="155"/>
        <end position="168"/>
    </location>
</feature>
<feature type="repeat" description="1; half-length" evidence="10">
    <location>
        <begin position="55"/>
        <end position="58"/>
    </location>
</feature>
<feature type="repeat" description="2" evidence="10">
    <location>
        <begin position="59"/>
        <end position="66"/>
    </location>
</feature>
<feature type="repeat" description="3; approximate" evidence="10">
    <location>
        <begin position="70"/>
        <end position="77"/>
    </location>
</feature>
<feature type="repeat" description="4" evidence="10">
    <location>
        <begin position="78"/>
        <end position="85"/>
    </location>
</feature>
<feature type="repeat" description="5" evidence="10">
    <location>
        <begin position="86"/>
        <end position="93"/>
    </location>
</feature>
<feature type="repeat" description="6" evidence="10">
    <location>
        <begin position="94"/>
        <end position="101"/>
    </location>
</feature>
<feature type="repeat" description="7" evidence="10">
    <location>
        <begin position="102"/>
        <end position="109"/>
    </location>
</feature>
<feature type="repeat" description="8" evidence="10">
    <location>
        <begin position="110"/>
        <end position="117"/>
    </location>
</feature>
<feature type="domain" description="VM" evidence="2">
    <location>
        <begin position="117"/>
        <end position="154"/>
    </location>
</feature>
<feature type="region of interest" description="Essential for N-terminal propeptide removal. Potential serine protease cleavage site" evidence="3">
    <location>
        <begin position="43"/>
        <end position="46"/>
    </location>
</feature>
<feature type="region of interest" description="8 X 8 AA approximate repeats of P-[AS]-Y-S-A-P-A-[AS]" evidence="10">
    <location>
        <begin position="52"/>
        <end position="119"/>
    </location>
</feature>
<feature type="mutagenesis site" description="No appreciable effect on egg turgidity. Slight reduction in egg turgidity; when associated with S-140." evidence="5">
    <original>C</original>
    <variation>S</variation>
    <location>
        <position position="123"/>
    </location>
</feature>
<feature type="mutagenesis site" description="Loss of egg turgidity. Females are sterile." evidence="5">
    <original>C</original>
    <variation>S</variation>
    <location>
        <position position="131"/>
    </location>
</feature>
<feature type="mutagenesis site" description="No appreciable effect on egg turgidity. Slight reduction in egg turgidity; when associated with S-123." evidence="5">
    <original>C</original>
    <variation>S</variation>
    <location>
        <position position="140"/>
    </location>
</feature>
<feature type="sequence conflict" description="In Ref. 1; AAA28984." evidence="7" ref="1">
    <original>C</original>
    <variation>L</variation>
    <location>
        <position position="140"/>
    </location>
</feature>